<comment type="function">
    <text evidence="1">Binds as a heterodimer with protein bS6 to the central domain of the 16S rRNA, where it helps stabilize the platform of the 30S subunit.</text>
</comment>
<comment type="subunit">
    <text evidence="1">Part of the 30S ribosomal subunit. Forms a tight heterodimer with protein bS6.</text>
</comment>
<comment type="similarity">
    <text evidence="1">Belongs to the bacterial ribosomal protein bS18 family.</text>
</comment>
<protein>
    <recommendedName>
        <fullName evidence="1">Small ribosomal subunit protein bS18</fullName>
    </recommendedName>
    <alternativeName>
        <fullName evidence="2">30S ribosomal protein S18</fullName>
    </alternativeName>
</protein>
<evidence type="ECO:0000255" key="1">
    <source>
        <dbReference type="HAMAP-Rule" id="MF_00270"/>
    </source>
</evidence>
<evidence type="ECO:0000305" key="2"/>
<dbReference type="EMBL" id="CP001341">
    <property type="protein sequence ID" value="ACL41842.1"/>
    <property type="molecule type" value="Genomic_DNA"/>
</dbReference>
<dbReference type="RefSeq" id="WP_003800144.1">
    <property type="nucleotide sequence ID" value="NC_011886.1"/>
</dbReference>
<dbReference type="SMR" id="B8H839"/>
<dbReference type="STRING" id="452863.Achl_3889"/>
<dbReference type="GeneID" id="97423433"/>
<dbReference type="KEGG" id="ach:Achl_3889"/>
<dbReference type="eggNOG" id="COG0238">
    <property type="taxonomic scope" value="Bacteria"/>
</dbReference>
<dbReference type="HOGENOM" id="CLU_148710_1_0_11"/>
<dbReference type="OrthoDB" id="9812008at2"/>
<dbReference type="Proteomes" id="UP000002505">
    <property type="component" value="Chromosome"/>
</dbReference>
<dbReference type="GO" id="GO:0022627">
    <property type="term" value="C:cytosolic small ribosomal subunit"/>
    <property type="evidence" value="ECO:0007669"/>
    <property type="project" value="TreeGrafter"/>
</dbReference>
<dbReference type="GO" id="GO:0070181">
    <property type="term" value="F:small ribosomal subunit rRNA binding"/>
    <property type="evidence" value="ECO:0007669"/>
    <property type="project" value="TreeGrafter"/>
</dbReference>
<dbReference type="GO" id="GO:0003735">
    <property type="term" value="F:structural constituent of ribosome"/>
    <property type="evidence" value="ECO:0007669"/>
    <property type="project" value="InterPro"/>
</dbReference>
<dbReference type="GO" id="GO:0006412">
    <property type="term" value="P:translation"/>
    <property type="evidence" value="ECO:0007669"/>
    <property type="project" value="UniProtKB-UniRule"/>
</dbReference>
<dbReference type="Gene3D" id="4.10.640.10">
    <property type="entry name" value="Ribosomal protein S18"/>
    <property type="match status" value="1"/>
</dbReference>
<dbReference type="HAMAP" id="MF_00270">
    <property type="entry name" value="Ribosomal_bS18"/>
    <property type="match status" value="1"/>
</dbReference>
<dbReference type="InterPro" id="IPR001648">
    <property type="entry name" value="Ribosomal_bS18"/>
</dbReference>
<dbReference type="InterPro" id="IPR018275">
    <property type="entry name" value="Ribosomal_bS18_CS"/>
</dbReference>
<dbReference type="InterPro" id="IPR036870">
    <property type="entry name" value="Ribosomal_bS18_sf"/>
</dbReference>
<dbReference type="NCBIfam" id="TIGR00165">
    <property type="entry name" value="S18"/>
    <property type="match status" value="1"/>
</dbReference>
<dbReference type="PANTHER" id="PTHR13479">
    <property type="entry name" value="30S RIBOSOMAL PROTEIN S18"/>
    <property type="match status" value="1"/>
</dbReference>
<dbReference type="PANTHER" id="PTHR13479:SF40">
    <property type="entry name" value="SMALL RIBOSOMAL SUBUNIT PROTEIN BS18M"/>
    <property type="match status" value="1"/>
</dbReference>
<dbReference type="Pfam" id="PF01084">
    <property type="entry name" value="Ribosomal_S18"/>
    <property type="match status" value="1"/>
</dbReference>
<dbReference type="PRINTS" id="PR00974">
    <property type="entry name" value="RIBOSOMALS18"/>
</dbReference>
<dbReference type="SUPFAM" id="SSF46911">
    <property type="entry name" value="Ribosomal protein S18"/>
    <property type="match status" value="1"/>
</dbReference>
<dbReference type="PROSITE" id="PS00057">
    <property type="entry name" value="RIBOSOMAL_S18"/>
    <property type="match status" value="1"/>
</dbReference>
<accession>B8H839</accession>
<feature type="chain" id="PRO_1000196513" description="Small ribosomal subunit protein bS18">
    <location>
        <begin position="1"/>
        <end position="79"/>
    </location>
</feature>
<keyword id="KW-0687">Ribonucleoprotein</keyword>
<keyword id="KW-0689">Ribosomal protein</keyword>
<keyword id="KW-0694">RNA-binding</keyword>
<keyword id="KW-0699">rRNA-binding</keyword>
<proteinExistence type="inferred from homology"/>
<gene>
    <name evidence="1" type="primary">rpsR</name>
    <name type="ordered locus">Achl_3889</name>
</gene>
<reference key="1">
    <citation type="submission" date="2009-01" db="EMBL/GenBank/DDBJ databases">
        <title>Complete sequence of chromosome of Arthrobacter chlorophenolicus A6.</title>
        <authorList>
            <consortium name="US DOE Joint Genome Institute"/>
            <person name="Lucas S."/>
            <person name="Copeland A."/>
            <person name="Lapidus A."/>
            <person name="Glavina del Rio T."/>
            <person name="Tice H."/>
            <person name="Bruce D."/>
            <person name="Goodwin L."/>
            <person name="Pitluck S."/>
            <person name="Goltsman E."/>
            <person name="Clum A."/>
            <person name="Larimer F."/>
            <person name="Land M."/>
            <person name="Hauser L."/>
            <person name="Kyrpides N."/>
            <person name="Mikhailova N."/>
            <person name="Jansson J."/>
            <person name="Richardson P."/>
        </authorList>
    </citation>
    <scope>NUCLEOTIDE SEQUENCE [LARGE SCALE GENOMIC DNA]</scope>
    <source>
        <strain>ATCC 700700 / DSM 12829 / CIP 107037 / JCM 12360 / KCTC 9906 / NCIMB 13794 / A6</strain>
    </source>
</reference>
<sequence length="79" mass="8743">MAKAELRKPKPKSNPLKAADITVIDYKDVALLRKFISDRGKIRARRVTGVTVQEQRKIAQAIKNAREVALLPYSGAGRG</sequence>
<name>RS18_PSECP</name>
<organism>
    <name type="scientific">Pseudarthrobacter chlorophenolicus (strain ATCC 700700 / DSM 12829 / CIP 107037 / JCM 12360 / KCTC 9906 / NCIMB 13794 / A6)</name>
    <name type="common">Arthrobacter chlorophenolicus</name>
    <dbReference type="NCBI Taxonomy" id="452863"/>
    <lineage>
        <taxon>Bacteria</taxon>
        <taxon>Bacillati</taxon>
        <taxon>Actinomycetota</taxon>
        <taxon>Actinomycetes</taxon>
        <taxon>Micrococcales</taxon>
        <taxon>Micrococcaceae</taxon>
        <taxon>Pseudarthrobacter</taxon>
    </lineage>
</organism>